<evidence type="ECO:0000250" key="1"/>
<evidence type="ECO:0000305" key="2"/>
<accession>Q5EAA4</accession>
<accession>A6QQK1</accession>
<comment type="function">
    <text evidence="1">May regulate the activity of kinases.</text>
</comment>
<comment type="similarity">
    <text evidence="2">Belongs to the MOB1/phocein family.</text>
</comment>
<keyword id="KW-0479">Metal-binding</keyword>
<keyword id="KW-1185">Reference proteome</keyword>
<keyword id="KW-0862">Zinc</keyword>
<organism>
    <name type="scientific">Bos taurus</name>
    <name type="common">Bovine</name>
    <dbReference type="NCBI Taxonomy" id="9913"/>
    <lineage>
        <taxon>Eukaryota</taxon>
        <taxon>Metazoa</taxon>
        <taxon>Chordata</taxon>
        <taxon>Craniata</taxon>
        <taxon>Vertebrata</taxon>
        <taxon>Euteleostomi</taxon>
        <taxon>Mammalia</taxon>
        <taxon>Eutheria</taxon>
        <taxon>Laurasiatheria</taxon>
        <taxon>Artiodactyla</taxon>
        <taxon>Ruminantia</taxon>
        <taxon>Pecora</taxon>
        <taxon>Bovidae</taxon>
        <taxon>Bovinae</taxon>
        <taxon>Bos</taxon>
    </lineage>
</organism>
<reference key="1">
    <citation type="journal article" date="2005" name="BMC Genomics">
        <title>Characterization of 954 bovine full-CDS cDNA sequences.</title>
        <authorList>
            <person name="Harhay G.P."/>
            <person name="Sonstegard T.S."/>
            <person name="Keele J.W."/>
            <person name="Heaton M.P."/>
            <person name="Clawson M.L."/>
            <person name="Snelling W.M."/>
            <person name="Wiedmann R.T."/>
            <person name="Van Tassell C.P."/>
            <person name="Smith T.P.L."/>
        </authorList>
    </citation>
    <scope>NUCLEOTIDE SEQUENCE [LARGE SCALE MRNA]</scope>
</reference>
<reference key="2">
    <citation type="submission" date="2007-07" db="EMBL/GenBank/DDBJ databases">
        <authorList>
            <consortium name="NIH - Mammalian Gene Collection (MGC) project"/>
        </authorList>
    </citation>
    <scope>NUCLEOTIDE SEQUENCE [LARGE SCALE MRNA]</scope>
    <source>
        <strain>Hereford</strain>
        <tissue>Hippocampus</tissue>
    </source>
</reference>
<protein>
    <recommendedName>
        <fullName>MOB kinase activator 3C</fullName>
    </recommendedName>
    <alternativeName>
        <fullName>Mob1 homolog 2C</fullName>
    </alternativeName>
    <alternativeName>
        <fullName>Mps one binder kinase activator-like 2C</fullName>
    </alternativeName>
</protein>
<dbReference type="EMBL" id="BT020665">
    <property type="protein sequence ID" value="AAX08682.1"/>
    <property type="molecule type" value="mRNA"/>
</dbReference>
<dbReference type="EMBL" id="BC149870">
    <property type="protein sequence ID" value="AAI49871.1"/>
    <property type="molecule type" value="mRNA"/>
</dbReference>
<dbReference type="RefSeq" id="NP_001029927.1">
    <property type="nucleotide sequence ID" value="NM_001034755.2"/>
</dbReference>
<dbReference type="RefSeq" id="NP_001421689.1">
    <property type="nucleotide sequence ID" value="NM_001434760.1"/>
</dbReference>
<dbReference type="RefSeq" id="XP_005204908.1">
    <property type="nucleotide sequence ID" value="XM_005204851.1"/>
</dbReference>
<dbReference type="RefSeq" id="XP_005204909.1">
    <property type="nucleotide sequence ID" value="XM_005204852.3"/>
</dbReference>
<dbReference type="SMR" id="Q5EAA4"/>
<dbReference type="FunCoup" id="Q5EAA4">
    <property type="interactions" value="317"/>
</dbReference>
<dbReference type="STRING" id="9913.ENSBTAP00000032106"/>
<dbReference type="PaxDb" id="9913-ENSBTAP00000032106"/>
<dbReference type="Ensembl" id="ENSBTAT00000032168.3">
    <property type="protein sequence ID" value="ENSBTAP00000032106.1"/>
    <property type="gene ID" value="ENSBTAG00000023551.5"/>
</dbReference>
<dbReference type="GeneID" id="614275"/>
<dbReference type="KEGG" id="bta:614275"/>
<dbReference type="CTD" id="148932"/>
<dbReference type="VEuPathDB" id="HostDB:ENSBTAG00000023551"/>
<dbReference type="VGNC" id="VGNC:31546">
    <property type="gene designation" value="MOB3C"/>
</dbReference>
<dbReference type="eggNOG" id="KOG1903">
    <property type="taxonomic scope" value="Eukaryota"/>
</dbReference>
<dbReference type="GeneTree" id="ENSGT01120000271863"/>
<dbReference type="HOGENOM" id="CLU_038321_3_0_1"/>
<dbReference type="InParanoid" id="Q5EAA4"/>
<dbReference type="OMA" id="AEHCSET"/>
<dbReference type="OrthoDB" id="8170117at2759"/>
<dbReference type="TreeFam" id="TF300789"/>
<dbReference type="Proteomes" id="UP000009136">
    <property type="component" value="Chromosome 3"/>
</dbReference>
<dbReference type="Bgee" id="ENSBTAG00000023551">
    <property type="expression patterns" value="Expressed in ileocecal valve and 101 other cell types or tissues"/>
</dbReference>
<dbReference type="GO" id="GO:0005737">
    <property type="term" value="C:cytoplasm"/>
    <property type="evidence" value="ECO:0000318"/>
    <property type="project" value="GO_Central"/>
</dbReference>
<dbReference type="GO" id="GO:0005634">
    <property type="term" value="C:nucleus"/>
    <property type="evidence" value="ECO:0000318"/>
    <property type="project" value="GO_Central"/>
</dbReference>
<dbReference type="GO" id="GO:0046872">
    <property type="term" value="F:metal ion binding"/>
    <property type="evidence" value="ECO:0007669"/>
    <property type="project" value="UniProtKB-KW"/>
</dbReference>
<dbReference type="GO" id="GO:0030295">
    <property type="term" value="F:protein kinase activator activity"/>
    <property type="evidence" value="ECO:0000318"/>
    <property type="project" value="GO_Central"/>
</dbReference>
<dbReference type="GO" id="GO:0007165">
    <property type="term" value="P:signal transduction"/>
    <property type="evidence" value="ECO:0000318"/>
    <property type="project" value="GO_Central"/>
</dbReference>
<dbReference type="FunFam" id="1.20.140.30:FF:000001">
    <property type="entry name" value="MOB kinase activator 1A"/>
    <property type="match status" value="1"/>
</dbReference>
<dbReference type="Gene3D" id="1.20.140.30">
    <property type="entry name" value="MOB kinase activator"/>
    <property type="match status" value="1"/>
</dbReference>
<dbReference type="InterPro" id="IPR005301">
    <property type="entry name" value="MOB_kinase_act_fam"/>
</dbReference>
<dbReference type="InterPro" id="IPR036703">
    <property type="entry name" value="MOB_kinase_act_sf"/>
</dbReference>
<dbReference type="PANTHER" id="PTHR22599">
    <property type="entry name" value="MPS ONE BINDER KINASE ACTIVATOR-LIKE MOB"/>
    <property type="match status" value="1"/>
</dbReference>
<dbReference type="Pfam" id="PF03637">
    <property type="entry name" value="Mob1_phocein"/>
    <property type="match status" value="1"/>
</dbReference>
<dbReference type="SMART" id="SM01388">
    <property type="entry name" value="Mob1_phocein"/>
    <property type="match status" value="1"/>
</dbReference>
<dbReference type="SUPFAM" id="SSF101152">
    <property type="entry name" value="Mob1/phocein"/>
    <property type="match status" value="1"/>
</dbReference>
<feature type="chain" id="PRO_0000247548" description="MOB kinase activator 3C">
    <location>
        <begin position="1"/>
        <end position="216"/>
    </location>
</feature>
<feature type="binding site" evidence="1">
    <location>
        <position position="82"/>
    </location>
    <ligand>
        <name>Zn(2+)</name>
        <dbReference type="ChEBI" id="CHEBI:29105"/>
    </ligand>
</feature>
<feature type="binding site" evidence="1">
    <location>
        <position position="87"/>
    </location>
    <ligand>
        <name>Zn(2+)</name>
        <dbReference type="ChEBI" id="CHEBI:29105"/>
    </ligand>
</feature>
<feature type="binding site" evidence="1">
    <location>
        <position position="164"/>
    </location>
    <ligand>
        <name>Zn(2+)</name>
        <dbReference type="ChEBI" id="CHEBI:29105"/>
    </ligand>
</feature>
<feature type="binding site" evidence="1">
    <location>
        <position position="169"/>
    </location>
    <ligand>
        <name>Zn(2+)</name>
        <dbReference type="ChEBI" id="CHEBI:29105"/>
    </ligand>
</feature>
<name>MOB3C_BOVIN</name>
<gene>
    <name type="primary">MOB3C</name>
    <name type="synonym">MOBKL2C</name>
</gene>
<proteinExistence type="evidence at transcript level"/>
<sequence length="216" mass="25655">MALCLKQVFSKDKTFRPRKRFEPGTQRFELYKKAQASLKSGLDLRSVVRLPPGENIDDWIAVHVVDFFNRINLIYGTMAERCSETSCPVMAGGPRYEYRWQDERQYRRPAKLSAPRYMALLMDWIESLINDEDVFPTRVGVPFPKNFQQVCTKILTRLFRVFVHVYIHHFDSILSMGAEAHVNTCYKHFYYFIREFSLVDQRELEPLREMTERICH</sequence>